<dbReference type="EMBL" id="AF071002">
    <property type="protein sequence ID" value="AAD28086.1"/>
    <property type="molecule type" value="mRNA"/>
</dbReference>
<dbReference type="EMBL" id="AF302095">
    <property type="protein sequence ID" value="AAG13416.1"/>
    <property type="molecule type" value="mRNA"/>
</dbReference>
<dbReference type="EMBL" id="DQ784804">
    <property type="protein sequence ID" value="ABQ01239.1"/>
    <property type="molecule type" value="Genomic_DNA"/>
</dbReference>
<dbReference type="EMBL" id="CH471079">
    <property type="protein sequence ID" value="EAX09791.1"/>
    <property type="molecule type" value="Genomic_DNA"/>
</dbReference>
<dbReference type="EMBL" id="BC093892">
    <property type="protein sequence ID" value="AAH93892.1"/>
    <property type="molecule type" value="mRNA"/>
</dbReference>
<dbReference type="EMBL" id="BC112087">
    <property type="protein sequence ID" value="AAI12088.1"/>
    <property type="molecule type" value="mRNA"/>
</dbReference>
<dbReference type="CCDS" id="CCDS13635.1"/>
<dbReference type="RefSeq" id="NP_751951.1">
    <property type="nucleotide sequence ID" value="NM_172201.2"/>
</dbReference>
<dbReference type="PDB" id="2M0Q">
    <property type="method" value="NMR"/>
    <property type="chains" value="A=1-123"/>
</dbReference>
<dbReference type="PDBsum" id="2M0Q"/>
<dbReference type="BMRB" id="Q9Y6J6"/>
<dbReference type="SMR" id="Q9Y6J6"/>
<dbReference type="BioGRID" id="115313">
    <property type="interactions" value="6"/>
</dbReference>
<dbReference type="ComplexPortal" id="CPX-3073">
    <property type="entry name" value="Voltage-gated potassium channel complex variant 2"/>
</dbReference>
<dbReference type="CORUM" id="Q9Y6J6"/>
<dbReference type="FunCoup" id="Q9Y6J6">
    <property type="interactions" value="19"/>
</dbReference>
<dbReference type="STRING" id="9606.ENSP00000290310"/>
<dbReference type="DrugBank" id="DB00228">
    <property type="generic name" value="Enflurane"/>
</dbReference>
<dbReference type="DrugBank" id="DB01110">
    <property type="generic name" value="Miconazole"/>
</dbReference>
<dbReference type="DrugBank" id="DB01069">
    <property type="generic name" value="Promethazine"/>
</dbReference>
<dbReference type="GlyCosmos" id="Q9Y6J6">
    <property type="glycosylation" value="2 sites, No reported glycans"/>
</dbReference>
<dbReference type="GlyGen" id="Q9Y6J6">
    <property type="glycosylation" value="2 sites"/>
</dbReference>
<dbReference type="iPTMnet" id="Q9Y6J6"/>
<dbReference type="PhosphoSitePlus" id="Q9Y6J6"/>
<dbReference type="BioMuta" id="KCNE2"/>
<dbReference type="DMDM" id="6685661"/>
<dbReference type="jPOST" id="Q9Y6J6"/>
<dbReference type="MassIVE" id="Q9Y6J6"/>
<dbReference type="PaxDb" id="9606-ENSP00000290310"/>
<dbReference type="PeptideAtlas" id="Q9Y6J6"/>
<dbReference type="Antibodypedia" id="22942">
    <property type="antibodies" value="164 antibodies from 27 providers"/>
</dbReference>
<dbReference type="DNASU" id="9992"/>
<dbReference type="Ensembl" id="ENST00000290310.4">
    <property type="protein sequence ID" value="ENSP00000290310.2"/>
    <property type="gene ID" value="ENSG00000159197.5"/>
</dbReference>
<dbReference type="Ensembl" id="ENST00000715813.1">
    <property type="protein sequence ID" value="ENSP00000520524.1"/>
    <property type="gene ID" value="ENSG00000159197.5"/>
</dbReference>
<dbReference type="GeneID" id="9992"/>
<dbReference type="KEGG" id="hsa:9992"/>
<dbReference type="MANE-Select" id="ENST00000290310.4">
    <property type="protein sequence ID" value="ENSP00000290310.2"/>
    <property type="RefSeq nucleotide sequence ID" value="NM_172201.2"/>
    <property type="RefSeq protein sequence ID" value="NP_751951.1"/>
</dbReference>
<dbReference type="UCSC" id="uc002ytt.2">
    <property type="organism name" value="human"/>
</dbReference>
<dbReference type="AGR" id="HGNC:6242"/>
<dbReference type="CTD" id="9992"/>
<dbReference type="DisGeNET" id="9992"/>
<dbReference type="GeneCards" id="KCNE2"/>
<dbReference type="GeneReviews" id="KCNE2"/>
<dbReference type="HGNC" id="HGNC:6242">
    <property type="gene designation" value="KCNE2"/>
</dbReference>
<dbReference type="HPA" id="ENSG00000159197">
    <property type="expression patterns" value="Tissue enriched (stomach)"/>
</dbReference>
<dbReference type="MalaCards" id="KCNE2"/>
<dbReference type="MIM" id="603796">
    <property type="type" value="gene"/>
</dbReference>
<dbReference type="MIM" id="611493">
    <property type="type" value="phenotype"/>
</dbReference>
<dbReference type="MIM" id="613693">
    <property type="type" value="phenotype"/>
</dbReference>
<dbReference type="neXtProt" id="NX_Q9Y6J6"/>
<dbReference type="OpenTargets" id="ENSG00000159197"/>
<dbReference type="Orphanet" id="334">
    <property type="disease" value="Familial atrial fibrillation"/>
</dbReference>
<dbReference type="Orphanet" id="101016">
    <property type="disease" value="Romano-Ward syndrome"/>
</dbReference>
<dbReference type="PharmGKB" id="PA392"/>
<dbReference type="VEuPathDB" id="HostDB:ENSG00000159197"/>
<dbReference type="eggNOG" id="ENOG502S1GJ">
    <property type="taxonomic scope" value="Eukaryota"/>
</dbReference>
<dbReference type="GeneTree" id="ENSGT00940000154497"/>
<dbReference type="HOGENOM" id="CLU_1991831_0_0_1"/>
<dbReference type="InParanoid" id="Q9Y6J6"/>
<dbReference type="OMA" id="RIFVTYM"/>
<dbReference type="OrthoDB" id="9267127at2759"/>
<dbReference type="PAN-GO" id="Q9Y6J6">
    <property type="GO annotations" value="9 GO annotations based on evolutionary models"/>
</dbReference>
<dbReference type="PhylomeDB" id="Q9Y6J6"/>
<dbReference type="TreeFam" id="TF336058"/>
<dbReference type="PathwayCommons" id="Q9Y6J6"/>
<dbReference type="Reactome" id="R-HSA-5576890">
    <property type="pathway name" value="Phase 3 - rapid repolarisation"/>
</dbReference>
<dbReference type="Reactome" id="R-HSA-5576893">
    <property type="pathway name" value="Phase 2 - plateau phase"/>
</dbReference>
<dbReference type="SignaLink" id="Q9Y6J6"/>
<dbReference type="BioGRID-ORCS" id="9992">
    <property type="hits" value="31 hits in 1139 CRISPR screens"/>
</dbReference>
<dbReference type="ChiTaRS" id="KCNE2">
    <property type="organism name" value="human"/>
</dbReference>
<dbReference type="EvolutionaryTrace" id="Q9Y6J6"/>
<dbReference type="GeneWiki" id="KCNE2"/>
<dbReference type="GenomeRNAi" id="9992"/>
<dbReference type="Pharos" id="Q9Y6J6">
    <property type="development level" value="Tbio"/>
</dbReference>
<dbReference type="PRO" id="PR:Q9Y6J6"/>
<dbReference type="Proteomes" id="UP000005640">
    <property type="component" value="Chromosome 21"/>
</dbReference>
<dbReference type="RNAct" id="Q9Y6J6">
    <property type="molecule type" value="protein"/>
</dbReference>
<dbReference type="Bgee" id="ENSG00000159197">
    <property type="expression patterns" value="Expressed in body of stomach and 111 other cell types or tissues"/>
</dbReference>
<dbReference type="GO" id="GO:0016324">
    <property type="term" value="C:apical plasma membrane"/>
    <property type="evidence" value="ECO:0007669"/>
    <property type="project" value="UniProtKB-SubCell"/>
</dbReference>
<dbReference type="GO" id="GO:0009986">
    <property type="term" value="C:cell surface"/>
    <property type="evidence" value="ECO:0000314"/>
    <property type="project" value="BHF-UCL"/>
</dbReference>
<dbReference type="GO" id="GO:0005764">
    <property type="term" value="C:lysosome"/>
    <property type="evidence" value="ECO:0007005"/>
    <property type="project" value="UniProtKB"/>
</dbReference>
<dbReference type="GO" id="GO:0005886">
    <property type="term" value="C:plasma membrane"/>
    <property type="evidence" value="ECO:0000314"/>
    <property type="project" value="UniProtKB"/>
</dbReference>
<dbReference type="GO" id="GO:0008076">
    <property type="term" value="C:voltage-gated potassium channel complex"/>
    <property type="evidence" value="ECO:0000314"/>
    <property type="project" value="BHF-UCL"/>
</dbReference>
<dbReference type="GO" id="GO:0015459">
    <property type="term" value="F:potassium channel regulator activity"/>
    <property type="evidence" value="ECO:0000314"/>
    <property type="project" value="UniProtKB"/>
</dbReference>
<dbReference type="GO" id="GO:0044325">
    <property type="term" value="F:transmembrane transporter binding"/>
    <property type="evidence" value="ECO:0000314"/>
    <property type="project" value="BHF-UCL"/>
</dbReference>
<dbReference type="GO" id="GO:1902282">
    <property type="term" value="F:voltage-gated potassium channel activity involved in ventricular cardiac muscle cell action potential repolarization"/>
    <property type="evidence" value="ECO:0000315"/>
    <property type="project" value="BHF-UCL"/>
</dbReference>
<dbReference type="GO" id="GO:0086002">
    <property type="term" value="P:cardiac muscle cell action potential involved in contraction"/>
    <property type="evidence" value="ECO:0000315"/>
    <property type="project" value="BHF-UCL"/>
</dbReference>
<dbReference type="GO" id="GO:0071466">
    <property type="term" value="P:cellular response to xenobiotic stimulus"/>
    <property type="evidence" value="ECO:0000314"/>
    <property type="project" value="BHF-UCL"/>
</dbReference>
<dbReference type="GO" id="GO:0086009">
    <property type="term" value="P:membrane repolarization"/>
    <property type="evidence" value="ECO:0000314"/>
    <property type="project" value="BHF-UCL"/>
</dbReference>
<dbReference type="GO" id="GO:0086011">
    <property type="term" value="P:membrane repolarization during action potential"/>
    <property type="evidence" value="ECO:0000315"/>
    <property type="project" value="BHF-UCL"/>
</dbReference>
<dbReference type="GO" id="GO:0098915">
    <property type="term" value="P:membrane repolarization during ventricular cardiac muscle cell action potential"/>
    <property type="evidence" value="ECO:0000315"/>
    <property type="project" value="BHF-UCL"/>
</dbReference>
<dbReference type="GO" id="GO:1902260">
    <property type="term" value="P:negative regulation of delayed rectifier potassium channel activity"/>
    <property type="evidence" value="ECO:0000314"/>
    <property type="project" value="UniProtKB"/>
</dbReference>
<dbReference type="GO" id="GO:1901800">
    <property type="term" value="P:positive regulation of proteasomal protein catabolic process"/>
    <property type="evidence" value="ECO:0000314"/>
    <property type="project" value="BHF-UCL"/>
</dbReference>
<dbReference type="GO" id="GO:0097623">
    <property type="term" value="P:potassium ion export across plasma membrane"/>
    <property type="evidence" value="ECO:0000314"/>
    <property type="project" value="BHF-UCL"/>
</dbReference>
<dbReference type="GO" id="GO:1990573">
    <property type="term" value="P:potassium ion import across plasma membrane"/>
    <property type="evidence" value="ECO:0000315"/>
    <property type="project" value="BHF-UCL"/>
</dbReference>
<dbReference type="GO" id="GO:0071805">
    <property type="term" value="P:potassium ion transmembrane transport"/>
    <property type="evidence" value="ECO:0000314"/>
    <property type="project" value="BHF-UCL"/>
</dbReference>
<dbReference type="GO" id="GO:0086091">
    <property type="term" value="P:regulation of heart rate by cardiac conduction"/>
    <property type="evidence" value="ECO:0000315"/>
    <property type="project" value="BHF-UCL"/>
</dbReference>
<dbReference type="GO" id="GO:0060306">
    <property type="term" value="P:regulation of membrane repolarization"/>
    <property type="evidence" value="ECO:0000314"/>
    <property type="project" value="BHF-UCL"/>
</dbReference>
<dbReference type="GO" id="GO:1901379">
    <property type="term" value="P:regulation of potassium ion transmembrane transport"/>
    <property type="evidence" value="ECO:0000314"/>
    <property type="project" value="BHF-UCL"/>
</dbReference>
<dbReference type="GO" id="GO:0060307">
    <property type="term" value="P:regulation of ventricular cardiac muscle cell membrane repolarization"/>
    <property type="evidence" value="ECO:0000315"/>
    <property type="project" value="BHF-UCL"/>
</dbReference>
<dbReference type="GO" id="GO:0086005">
    <property type="term" value="P:ventricular cardiac muscle cell action potential"/>
    <property type="evidence" value="ECO:0000315"/>
    <property type="project" value="BHF-UCL"/>
</dbReference>
<dbReference type="InterPro" id="IPR000369">
    <property type="entry name" value="K_chnl_KCNE"/>
</dbReference>
<dbReference type="InterPro" id="IPR005425">
    <property type="entry name" value="K_chnl_volt-dep_bsu_KCNE2"/>
</dbReference>
<dbReference type="PANTHER" id="PTHR15282">
    <property type="entry name" value="POTASSIUM VOLTAGE-GATED CHANNEL SUBFAMILY E MEMBER 1, 3"/>
    <property type="match status" value="1"/>
</dbReference>
<dbReference type="PANTHER" id="PTHR15282:SF8">
    <property type="entry name" value="POTASSIUM VOLTAGE-GATED CHANNEL SUBFAMILY E MEMBER 2"/>
    <property type="match status" value="1"/>
</dbReference>
<dbReference type="Pfam" id="PF02060">
    <property type="entry name" value="ISK_Channel"/>
    <property type="match status" value="1"/>
</dbReference>
<dbReference type="PRINTS" id="PR01605">
    <property type="entry name" value="KCNE2CHANNEL"/>
</dbReference>
<evidence type="ECO:0000250" key="1">
    <source>
        <dbReference type="UniProtKB" id="P63161"/>
    </source>
</evidence>
<evidence type="ECO:0000250" key="2">
    <source>
        <dbReference type="UniProtKB" id="Q9D808"/>
    </source>
</evidence>
<evidence type="ECO:0000255" key="3"/>
<evidence type="ECO:0000269" key="4">
    <source>
    </source>
</evidence>
<evidence type="ECO:0000269" key="5">
    <source>
    </source>
</evidence>
<evidence type="ECO:0000269" key="6">
    <source>
    </source>
</evidence>
<evidence type="ECO:0000269" key="7">
    <source>
    </source>
</evidence>
<evidence type="ECO:0000269" key="8">
    <source>
    </source>
</evidence>
<evidence type="ECO:0000269" key="9">
    <source>
    </source>
</evidence>
<evidence type="ECO:0000269" key="10">
    <source>
    </source>
</evidence>
<evidence type="ECO:0000269" key="11">
    <source>
    </source>
</evidence>
<evidence type="ECO:0000269" key="12">
    <source>
    </source>
</evidence>
<evidence type="ECO:0000303" key="13">
    <source>
    </source>
</evidence>
<evidence type="ECO:0000305" key="14"/>
<evidence type="ECO:0000312" key="15">
    <source>
        <dbReference type="HGNC" id="HGNC:6242"/>
    </source>
</evidence>
<evidence type="ECO:0007829" key="16">
    <source>
        <dbReference type="PDB" id="2M0Q"/>
    </source>
</evidence>
<protein>
    <recommendedName>
        <fullName>Potassium voltage-gated channel subfamily E member 2</fullName>
    </recommendedName>
    <alternativeName>
        <fullName evidence="13">MinK-related peptide 1</fullName>
        <shortName evidence="13">MiRP1</shortName>
    </alternativeName>
    <alternativeName>
        <fullName>Minimum potassium ion channel-related peptide 1</fullName>
    </alternativeName>
    <alternativeName>
        <fullName>Potassium channel subunit beta MiRP1</fullName>
    </alternativeName>
</protein>
<keyword id="KW-0002">3D-structure</keyword>
<keyword id="KW-1020">Atrial fibrillation</keyword>
<keyword id="KW-1003">Cell membrane</keyword>
<keyword id="KW-0225">Disease variant</keyword>
<keyword id="KW-0325">Glycoprotein</keyword>
<keyword id="KW-0407">Ion channel</keyword>
<keyword id="KW-0406">Ion transport</keyword>
<keyword id="KW-0454">Long QT syndrome</keyword>
<keyword id="KW-0472">Membrane</keyword>
<keyword id="KW-0630">Potassium</keyword>
<keyword id="KW-0631">Potassium channel</keyword>
<keyword id="KW-0633">Potassium transport</keyword>
<keyword id="KW-1267">Proteomics identification</keyword>
<keyword id="KW-1185">Reference proteome</keyword>
<keyword id="KW-0812">Transmembrane</keyword>
<keyword id="KW-1133">Transmembrane helix</keyword>
<keyword id="KW-0813">Transport</keyword>
<keyword id="KW-0851">Voltage-gated channel</keyword>
<feature type="chain" id="PRO_0000144285" description="Potassium voltage-gated channel subfamily E member 2">
    <location>
        <begin position="1"/>
        <end position="123"/>
    </location>
</feature>
<feature type="transmembrane region" description="Helical" evidence="3">
    <location>
        <begin position="49"/>
        <end position="69"/>
    </location>
</feature>
<feature type="topological domain" description="Cytoplasmic" evidence="3">
    <location>
        <begin position="70"/>
        <end position="123"/>
    </location>
</feature>
<feature type="glycosylation site" description="N-linked (GlcNAc...) asparagine" evidence="3">
    <location>
        <position position="6"/>
    </location>
</feature>
<feature type="glycosylation site" description="N-linked (GlcNAc...) asparagine" evidence="3">
    <location>
        <position position="29"/>
    </location>
</feature>
<feature type="sequence variant" id="VAR_008375" description="In dbSNP:rs2234916." evidence="4 10">
    <original>T</original>
    <variation>A</variation>
    <location>
        <position position="8"/>
    </location>
</feature>
<feature type="sequence variant" id="VAR_037794" description="In dbSNP:rs35759083.">
    <original>T</original>
    <variation>I</variation>
    <location>
        <position position="8"/>
    </location>
</feature>
<feature type="sequence variant" id="VAR_008376" description="Risk factor for drug-induced arrhythmia; impedes activation and increases sensitivity to macrolide antibiotics; may lower current in KCNQ1/KCNE2 channel; dbSNP:rs16991652." evidence="4">
    <original>Q</original>
    <variation>E</variation>
    <location>
        <position position="9"/>
    </location>
</feature>
<feature type="sequence variant" id="VAR_074921" description="In LQT6; uncertain significance; dbSNP:rs142153692." evidence="11">
    <original>V</original>
    <variation>I</variation>
    <location>
        <position position="14"/>
    </location>
</feature>
<feature type="sequence variant" id="VAR_074922" description="In LQT6; uncertain significance; dbSNP:rs199473363." evidence="11">
    <original>I</original>
    <variation>N</variation>
    <location>
        <position position="20"/>
    </location>
</feature>
<feature type="sequence variant" id="VAR_037795" description="In ATFB4; gain-of-function mutation associated with the initiation and/or maintenance of AF; dbSNP:rs74315449." evidence="9">
    <original>R</original>
    <variation>C</variation>
    <location>
        <position position="27"/>
    </location>
</feature>
<feature type="sequence variant" id="VAR_074923" description="In LQT6; uncertain significance; dbSNP:rs148968498." evidence="11">
    <original>R</original>
    <variation>H</variation>
    <location>
        <position position="27"/>
    </location>
</feature>
<feature type="sequence variant" id="VAR_008377" description="In LQT6; forms I(KR) channels that deactivate twice as fast as wild type; dbSNP:rs74315447." evidence="4 11">
    <original>M</original>
    <variation>T</variation>
    <location>
        <position position="54"/>
    </location>
</feature>
<feature type="sequence variant" id="VAR_008378" description="In LQT6; may affect KCNQ1/KCNE2 channel; dbSNP:rs74315448." evidence="4 10 11">
    <original>I</original>
    <variation>T</variation>
    <location>
        <position position="57"/>
    </location>
</feature>
<feature type="sequence variant" id="VAR_029334" description="In LQT6; uncertain significance; dbSNP:rs16991654." evidence="10">
    <original>F</original>
    <variation>L</variation>
    <location>
        <position position="60"/>
    </location>
</feature>
<feature type="sequence variant" id="VAR_074924" description="In LQT6; uncertain significance; dbSNP:rs199473364." evidence="11">
    <original>V</original>
    <variation>L</variation>
    <location>
        <position position="65"/>
    </location>
</feature>
<feature type="sequence variant" id="VAR_015063" description="In LQT6; dbSNP:rs199473364." evidence="8">
    <original>V</original>
    <variation>M</variation>
    <location>
        <position position="65"/>
    </location>
</feature>
<feature type="sequence variant" id="VAR_022052" description="In dbSNP:rs16991656.">
    <original>A</original>
    <variation>V</variation>
    <location>
        <position position="66"/>
    </location>
</feature>
<feature type="sequence variant" id="VAR_074925" description="In LQT6; uncertain significance; dbSNP:rs199473365." evidence="11">
    <original>R</original>
    <variation>Q</variation>
    <location>
        <position position="77"/>
    </location>
</feature>
<feature type="sequence variant" id="VAR_035386" description="In LQT6; dbSNP:rs141423405." evidence="10">
    <original>R</original>
    <variation>W</variation>
    <location>
        <position position="77"/>
    </location>
</feature>
<feature type="sequence variant" id="VAR_074926" description="In LQT6; uncertain significance; dbSNP:rs74424227." evidence="11">
    <original>E</original>
    <variation>G</variation>
    <location>
        <position position="94"/>
    </location>
</feature>
<feature type="mutagenesis site" description="Increases tail current in KCNH2/KCNE2 channel." evidence="7">
    <original>K</original>
    <variation>H</variation>
    <location>
        <position position="75"/>
    </location>
</feature>
<feature type="helix" evidence="16">
    <location>
        <begin position="3"/>
        <end position="38"/>
    </location>
</feature>
<feature type="helix" evidence="16">
    <location>
        <begin position="46"/>
        <end position="74"/>
    </location>
</feature>
<feature type="helix" evidence="16">
    <location>
        <begin position="88"/>
        <end position="114"/>
    </location>
</feature>
<organism>
    <name type="scientific">Homo sapiens</name>
    <name type="common">Human</name>
    <dbReference type="NCBI Taxonomy" id="9606"/>
    <lineage>
        <taxon>Eukaryota</taxon>
        <taxon>Metazoa</taxon>
        <taxon>Chordata</taxon>
        <taxon>Craniata</taxon>
        <taxon>Vertebrata</taxon>
        <taxon>Euteleostomi</taxon>
        <taxon>Mammalia</taxon>
        <taxon>Eutheria</taxon>
        <taxon>Euarchontoglires</taxon>
        <taxon>Primates</taxon>
        <taxon>Haplorrhini</taxon>
        <taxon>Catarrhini</taxon>
        <taxon>Hominidae</taxon>
        <taxon>Homo</taxon>
    </lineage>
</organism>
<name>KCNE2_HUMAN</name>
<gene>
    <name evidence="15" type="primary">KCNE2</name>
</gene>
<sequence length="123" mass="14472">MSTLSNFTQTLEDVFRRIFITYMDNWRQNTTAEQEALQAKVDAENFYYVILYLMVMIGMFSFIIVAILVSTVKSKRREHSNDPYHQYIVEDWQEKYKSQILNLEESKATIHENIGAAGFKMSP</sequence>
<comment type="function">
    <text evidence="1 2 4 5 6 8 12">Ancillary protein that functions as a regulatory subunit of the voltage-gated potassium (Kv) channel complex composed of pore-forming and potassium-conducting alpha subunits and of regulatory beta subunits (PubMed:10219239, PubMed:11034315, PubMed:11101505, PubMed:12185453, PubMed:20533308). KCNE2 beta subunit modulates the gating kinetics and enhances stability of the channel complex (PubMed:10219239, PubMed:11034315, PubMed:11101505, PubMed:12185453, PubMed:20533308). Alters the gating of the delayed rectifier Kv channel containing KCNB1 alpha subunit (PubMed:11101505, PubMed:20533308). Associates with KCNH2/HERG alpha subunit Kv channel to form the rapidly activating component of the delayed rectifying potassium current (IKr) in heart (PubMed:10219239, PubMed:12185453). May associate with KCNQ2 and/or KCNQ3 alpha subunits to modulate the native M-type current (PubMed:11034315). May associate with HCN1 and HCN2 channel subunits to increase potassium current (By similarity). Forms a heterooligomer complex with KCNQ1/KVLQT1 alpha subunits which leads to currents with an apparently instantaneous activation, a rapid deactivation process and a linear current-voltage relationship and decreases the amplitude of the outward current (PubMed:11101505). KCNQ1-KCNE2 channel associates with Na(+)-coupled myo-inositol symporter in the apical membrane of choroid plexus epithelium and regulates the myo-inositol gradient between blood and cerebrospinal fluid with an impact on neuron excitability (By similarity).</text>
</comment>
<comment type="subunit">
    <text evidence="1 4 5 6 12">Interacts with KCNB1 (By similarity). Associates with KCNH2/ERG1 (PubMed:10219239). May associate with KCNQ2 and KCNQ3 (PubMed:11034315). Associates with HCN1 and probably HCN2. Heteromultimer with KCNC2. Interacts with KCNC2 (By similarity). Interacts with KCNQ1; forms a heterooligomer complex that targets to the membrane raft and leading to currents with an apparently instantaneous activation, a rapid deactivation process and a linear current-voltage relationship and decreases the amplitude of the outward current (PubMed:11101505, PubMed:20533308).</text>
</comment>
<comment type="subcellular location">
    <subcellularLocation>
        <location evidence="12">Cell membrane</location>
        <topology evidence="1">Single-pass type I membrane protein</topology>
    </subcellularLocation>
    <subcellularLocation>
        <location evidence="2">Apical cell membrane</location>
        <topology evidence="3">Single-pass membrane protein</topology>
    </subcellularLocation>
    <text evidence="1">Colocalizes with KCNB1 at the plasma membrane.</text>
</comment>
<comment type="tissue specificity">
    <text evidence="5">Highly expressed in brain, heart, skeletal muscle, pancreas, placenta, kidney, colon and thymus. A small but significant expression is found in liver, ovary, testis, prostate, small intestine and leukocytes. Very low expression, nearly undetectable, in lung and spleen.</text>
</comment>
<comment type="disease" evidence="4 8 10 11">
    <disease id="DI-00684">
        <name>Long QT syndrome 6</name>
        <acronym>LQT6</acronym>
        <description>A heart disorder characterized by a prolonged QT interval on the ECG and polymorphic ventricular arrhythmias. They cause syncope and sudden death in response to exercise or emotional stress, and can present with a sentinel event of sudden cardiac death in infancy.</description>
        <dbReference type="MIM" id="613693"/>
    </disease>
    <text>The disease is caused by variants affecting the gene represented in this entry.</text>
</comment>
<comment type="disease" evidence="9">
    <disease id="DI-00147">
        <name>Atrial fibrillation, familial, 4</name>
        <acronym>ATFB4</acronym>
        <description>A familial form of atrial fibrillation, a common sustained cardiac rhythm disturbance. Atrial fibrillation is characterized by disorganized atrial electrical activity and ineffective atrial contraction promoting blood stasis in the atria and reduces ventricular filling. It can result in palpitations, syncope, thromboembolic stroke, and congestive heart failure.</description>
        <dbReference type="MIM" id="611493"/>
    </disease>
    <text>The disease is caused by variants affecting the gene represented in this entry.</text>
</comment>
<comment type="similarity">
    <text evidence="14">Belongs to the potassium channel KCNE family.</text>
</comment>
<proteinExistence type="evidence at protein level"/>
<accession>Q9Y6J6</accession>
<accession>A5H1P3</accession>
<accession>D3DSF8</accession>
<accession>Q52LJ5</accession>
<reference key="1">
    <citation type="journal article" date="1999" name="Cell">
        <title>MiRP1 forms IKr potassium channels with HERG and is associated with cardiac arrhythmia.</title>
        <authorList>
            <person name="Abbott G.W."/>
            <person name="Sesti F."/>
            <person name="Splawski I."/>
            <person name="Buck M.E."/>
            <person name="Lehmann M.H."/>
            <person name="Timothy K.W."/>
            <person name="Keating M.T."/>
            <person name="Goldstein S.A.N."/>
        </authorList>
    </citation>
    <scope>NUCLEOTIDE SEQUENCE [MRNA]</scope>
    <scope>VARIANTS LQT6 THR-54 AND THR-57</scope>
    <scope>VARIANTS ALA-8 AND GLU-9</scope>
    <scope>FUNCTION</scope>
    <scope>CHARACTERIZATION OF VARIANTS LQT6 THR-54 AND THR-57</scope>
    <scope>CHARACTERIZATION OF VARIANT GLU-9</scope>
    <scope>INTERACTION WITH KCNH2</scope>
    <source>
        <tissue>Heart</tissue>
    </source>
</reference>
<reference key="2">
    <citation type="submission" date="2000-09" db="EMBL/GenBank/DDBJ databases">
        <title>Cloning of human MIRP1 cDNA.</title>
        <authorList>
            <person name="Domenech A."/>
            <person name="Estivill X."/>
            <person name="de la Luna S."/>
        </authorList>
    </citation>
    <scope>NUCLEOTIDE SEQUENCE [MRNA]</scope>
</reference>
<reference key="3">
    <citation type="submission" date="2006-06" db="EMBL/GenBank/DDBJ databases">
        <authorList>
            <consortium name="NHLBI resequencing and genotyping service (RS&amp;G)"/>
        </authorList>
    </citation>
    <scope>NUCLEOTIDE SEQUENCE [GENOMIC DNA]</scope>
</reference>
<reference key="4">
    <citation type="submission" date="2005-09" db="EMBL/GenBank/DDBJ databases">
        <authorList>
            <person name="Mural R.J."/>
            <person name="Istrail S."/>
            <person name="Sutton G.G."/>
            <person name="Florea L."/>
            <person name="Halpern A.L."/>
            <person name="Mobarry C.M."/>
            <person name="Lippert R."/>
            <person name="Walenz B."/>
            <person name="Shatkay H."/>
            <person name="Dew I."/>
            <person name="Miller J.R."/>
            <person name="Flanigan M.J."/>
            <person name="Edwards N.J."/>
            <person name="Bolanos R."/>
            <person name="Fasulo D."/>
            <person name="Halldorsson B.V."/>
            <person name="Hannenhalli S."/>
            <person name="Turner R."/>
            <person name="Yooseph S."/>
            <person name="Lu F."/>
            <person name="Nusskern D.R."/>
            <person name="Shue B.C."/>
            <person name="Zheng X.H."/>
            <person name="Zhong F."/>
            <person name="Delcher A.L."/>
            <person name="Huson D.H."/>
            <person name="Kravitz S.A."/>
            <person name="Mouchard L."/>
            <person name="Reinert K."/>
            <person name="Remington K.A."/>
            <person name="Clark A.G."/>
            <person name="Waterman M.S."/>
            <person name="Eichler E.E."/>
            <person name="Adams M.D."/>
            <person name="Hunkapiller M.W."/>
            <person name="Myers E.W."/>
            <person name="Venter J.C."/>
        </authorList>
    </citation>
    <scope>NUCLEOTIDE SEQUENCE [LARGE SCALE GENOMIC DNA]</scope>
</reference>
<reference key="5">
    <citation type="journal article" date="2004" name="Genome Res.">
        <title>The status, quality, and expansion of the NIH full-length cDNA project: the Mammalian Gene Collection (MGC).</title>
        <authorList>
            <consortium name="The MGC Project Team"/>
        </authorList>
    </citation>
    <scope>NUCLEOTIDE SEQUENCE [LARGE SCALE MRNA]</scope>
</reference>
<reference key="6">
    <citation type="journal article" date="2000" name="FEBS Lett.">
        <title>M-type KCNQ2-KCNQ3 potassium channels are modulated by the KCNE2 subunit.</title>
        <authorList>
            <person name="Tinel N."/>
            <person name="Diochot S."/>
            <person name="Lauritzen I."/>
            <person name="Barhanin J."/>
            <person name="Lazdunski M."/>
            <person name="Borsotto M."/>
        </authorList>
    </citation>
    <scope>FUNCTION</scope>
    <scope>ASSOCIATION WITH KCNQ2/KCNQ3</scope>
    <scope>TISSUE SPECIFICITY</scope>
</reference>
<reference key="7">
    <citation type="journal article" date="2000" name="EMBO J.">
        <title>KCNE2 confers background current characteristics to the cardiac KCNQ1 potassium channel.</title>
        <authorList>
            <person name="Tinel N."/>
            <person name="Diochot S."/>
            <person name="Borsotto M."/>
            <person name="Lazdunski M."/>
            <person name="Barhanin J."/>
        </authorList>
    </citation>
    <scope>INTERACTION WITH KCNQ1</scope>
    <scope>FUNCTION</scope>
</reference>
<reference key="8">
    <citation type="journal article" date="2002" name="FASEB J.">
        <title>Disease-associated mutations in KCNE potassium channel subunits (MiRPs) reveal promiscuous disruption of multiple currents and conservation of mechanism.</title>
        <authorList>
            <person name="Abbott G.W."/>
            <person name="Goldstein S.A.N."/>
        </authorList>
    </citation>
    <scope>MUTAGENESIS OF LYS-75</scope>
</reference>
<reference key="9">
    <citation type="journal article" date="2010" name="J. Cell. Physiol.">
        <title>Impact of KCNE subunits on KCNQ1 (Kv7.1) channel membrane surface targeting.</title>
        <authorList>
            <person name="Roura-Ferrer M."/>
            <person name="Sole L."/>
            <person name="Oliveras A."/>
            <person name="Dahan R."/>
            <person name="Bielanska J."/>
            <person name="Villarroel A."/>
            <person name="Comes N."/>
            <person name="Felipe A."/>
        </authorList>
    </citation>
    <scope>FUNCTION</scope>
    <scope>SUBCELLULAR LOCATION</scope>
    <scope>INTERACTION WITH KCNQ1</scope>
</reference>
<reference key="10">
    <citation type="journal article" date="2002" name="J. Mol. Med.">
        <title>Identification and functional characterization of a novel KCNE2 (MiRP1) mutation that alters HERG channel kinetics.</title>
        <authorList>
            <person name="Isbrandt D."/>
            <person name="Friederich P."/>
            <person name="Solth A."/>
            <person name="Haverkamp W."/>
            <person name="Ebneth A."/>
            <person name="Borggrefe M."/>
            <person name="Funke H."/>
            <person name="Sauter K."/>
            <person name="Breithardt G."/>
            <person name="Pongs O."/>
            <person name="Schulze-Bahr E."/>
        </authorList>
    </citation>
    <scope>FUNCTION</scope>
    <scope>VARIANT LQT6 MET-65</scope>
</reference>
<reference key="11">
    <citation type="journal article" date="2004" name="Am. J. Hum. Genet.">
        <title>Identification of a KCNE2 gain-of-function mutation in patients with familial atrial fibrillation.</title>
        <authorList>
            <person name="Yang Y."/>
            <person name="Xia M."/>
            <person name="Jin Q."/>
            <person name="Bendahhou S."/>
            <person name="Shi J."/>
            <person name="Chen Y."/>
            <person name="Liang B."/>
            <person name="Lin J."/>
            <person name="Liu Y."/>
            <person name="Liu B."/>
            <person name="Zhou Q."/>
            <person name="Zhang D."/>
            <person name="Wang R."/>
            <person name="Ma N."/>
            <person name="Su X."/>
            <person name="Niu K."/>
            <person name="Pei Y."/>
            <person name="Xu W."/>
            <person name="Chen Z."/>
            <person name="Wan H."/>
            <person name="Cui J."/>
            <person name="Barhanin J."/>
            <person name="Chen Y."/>
        </authorList>
    </citation>
    <scope>VARIANT ATFB4 CYS-27</scope>
    <scope>CHARACTERIZATION OF VARIANT ATFB4 CYS-27</scope>
</reference>
<reference key="12">
    <citation type="journal article" date="2006" name="Clin. Genet.">
        <title>Spectrum of pathogenic mutations and associated polymorphisms in a cohort of 44 unrelated patients with long QT syndrome.</title>
        <authorList>
            <person name="Millat G."/>
            <person name="Chevalier P."/>
            <person name="Restier-Miron L."/>
            <person name="Da Costa A."/>
            <person name="Bouvagnet P."/>
            <person name="Kugener B."/>
            <person name="Fayol L."/>
            <person name="Gonzalez Armengod C."/>
            <person name="Oddou B."/>
            <person name="Chanavat V."/>
            <person name="Froidefond E."/>
            <person name="Perraudin R."/>
            <person name="Rousson R."/>
            <person name="Rodriguez-Lafrasse C."/>
        </authorList>
    </citation>
    <scope>VARIANTS LQT6 THR-57; LEU-60 AND TRP-77</scope>
    <scope>VARIANT ALA-8</scope>
</reference>
<reference key="13">
    <citation type="journal article" date="2009" name="Heart Rhythm">
        <title>Spectrum and prevalence of mutations from the first 2,500 consecutive unrelated patients referred for the FAMILION long QT syndrome genetic test.</title>
        <authorList>
            <person name="Kapplinger J.D."/>
            <person name="Tester D.J."/>
            <person name="Salisbury B.A."/>
            <person name="Carr J.L."/>
            <person name="Harris-Kerr C."/>
            <person name="Pollevick G.D."/>
            <person name="Wilde A.A."/>
            <person name="Ackerman M.J."/>
        </authorList>
    </citation>
    <scope>VARIANTS LQT6 ILE-14; ASN-20; HIS-27; THR-54; THR-57; LEU-65; GLN-77 AND GLY-94</scope>
</reference>